<keyword id="KW-0963">Cytoplasm</keyword>
<keyword id="KW-0342">GTP-binding</keyword>
<keyword id="KW-0436">Ligase</keyword>
<keyword id="KW-0460">Magnesium</keyword>
<keyword id="KW-0479">Metal-binding</keyword>
<keyword id="KW-0547">Nucleotide-binding</keyword>
<keyword id="KW-0658">Purine biosynthesis</keyword>
<comment type="function">
    <text evidence="1">Plays an important role in the de novo pathway of purine nucleotide biosynthesis. Catalyzes the first committed step in the biosynthesis of AMP from IMP.</text>
</comment>
<comment type="catalytic activity">
    <reaction evidence="1">
        <text>IMP + L-aspartate + GTP = N(6)-(1,2-dicarboxyethyl)-AMP + GDP + phosphate + 2 H(+)</text>
        <dbReference type="Rhea" id="RHEA:15753"/>
        <dbReference type="ChEBI" id="CHEBI:15378"/>
        <dbReference type="ChEBI" id="CHEBI:29991"/>
        <dbReference type="ChEBI" id="CHEBI:37565"/>
        <dbReference type="ChEBI" id="CHEBI:43474"/>
        <dbReference type="ChEBI" id="CHEBI:57567"/>
        <dbReference type="ChEBI" id="CHEBI:58053"/>
        <dbReference type="ChEBI" id="CHEBI:58189"/>
        <dbReference type="EC" id="6.3.4.4"/>
    </reaction>
</comment>
<comment type="cofactor">
    <cofactor evidence="1">
        <name>Mg(2+)</name>
        <dbReference type="ChEBI" id="CHEBI:18420"/>
    </cofactor>
    <text evidence="1">Binds 1 Mg(2+) ion per subunit.</text>
</comment>
<comment type="pathway">
    <text evidence="1">Purine metabolism; AMP biosynthesis via de novo pathway; AMP from IMP: step 1/2.</text>
</comment>
<comment type="subunit">
    <text evidence="1">Homodimer.</text>
</comment>
<comment type="subcellular location">
    <subcellularLocation>
        <location evidence="1">Cytoplasm</location>
    </subcellularLocation>
</comment>
<comment type="similarity">
    <text evidence="1">Belongs to the adenylosuccinate synthetase family.</text>
</comment>
<feature type="chain" id="PRO_1000000808" description="Adenylosuccinate synthetase">
    <location>
        <begin position="1"/>
        <end position="429"/>
    </location>
</feature>
<feature type="active site" description="Proton acceptor" evidence="1">
    <location>
        <position position="13"/>
    </location>
</feature>
<feature type="active site" description="Proton donor" evidence="1">
    <location>
        <position position="41"/>
    </location>
</feature>
<feature type="binding site" evidence="1">
    <location>
        <begin position="12"/>
        <end position="18"/>
    </location>
    <ligand>
        <name>GTP</name>
        <dbReference type="ChEBI" id="CHEBI:37565"/>
    </ligand>
</feature>
<feature type="binding site" description="in other chain" evidence="1">
    <location>
        <begin position="13"/>
        <end position="16"/>
    </location>
    <ligand>
        <name>IMP</name>
        <dbReference type="ChEBI" id="CHEBI:58053"/>
        <note>ligand shared between dimeric partners</note>
    </ligand>
</feature>
<feature type="binding site" evidence="1">
    <location>
        <position position="13"/>
    </location>
    <ligand>
        <name>Mg(2+)</name>
        <dbReference type="ChEBI" id="CHEBI:18420"/>
    </ligand>
</feature>
<feature type="binding site" description="in other chain" evidence="1">
    <location>
        <begin position="38"/>
        <end position="41"/>
    </location>
    <ligand>
        <name>IMP</name>
        <dbReference type="ChEBI" id="CHEBI:58053"/>
        <note>ligand shared between dimeric partners</note>
    </ligand>
</feature>
<feature type="binding site" evidence="1">
    <location>
        <begin position="40"/>
        <end position="42"/>
    </location>
    <ligand>
        <name>GTP</name>
        <dbReference type="ChEBI" id="CHEBI:37565"/>
    </ligand>
</feature>
<feature type="binding site" evidence="1">
    <location>
        <position position="40"/>
    </location>
    <ligand>
        <name>Mg(2+)</name>
        <dbReference type="ChEBI" id="CHEBI:18420"/>
    </ligand>
</feature>
<feature type="binding site" description="in other chain" evidence="1">
    <location>
        <position position="128"/>
    </location>
    <ligand>
        <name>IMP</name>
        <dbReference type="ChEBI" id="CHEBI:58053"/>
        <note>ligand shared between dimeric partners</note>
    </ligand>
</feature>
<feature type="binding site" evidence="1">
    <location>
        <position position="142"/>
    </location>
    <ligand>
        <name>IMP</name>
        <dbReference type="ChEBI" id="CHEBI:58053"/>
        <note>ligand shared between dimeric partners</note>
    </ligand>
</feature>
<feature type="binding site" description="in other chain" evidence="1">
    <location>
        <position position="223"/>
    </location>
    <ligand>
        <name>IMP</name>
        <dbReference type="ChEBI" id="CHEBI:58053"/>
        <note>ligand shared between dimeric partners</note>
    </ligand>
</feature>
<feature type="binding site" description="in other chain" evidence="1">
    <location>
        <position position="238"/>
    </location>
    <ligand>
        <name>IMP</name>
        <dbReference type="ChEBI" id="CHEBI:58053"/>
        <note>ligand shared between dimeric partners</note>
    </ligand>
</feature>
<feature type="binding site" evidence="1">
    <location>
        <begin position="298"/>
        <end position="304"/>
    </location>
    <ligand>
        <name>substrate</name>
    </ligand>
</feature>
<feature type="binding site" description="in other chain" evidence="1">
    <location>
        <position position="302"/>
    </location>
    <ligand>
        <name>IMP</name>
        <dbReference type="ChEBI" id="CHEBI:58053"/>
        <note>ligand shared between dimeric partners</note>
    </ligand>
</feature>
<feature type="binding site" evidence="1">
    <location>
        <position position="304"/>
    </location>
    <ligand>
        <name>GTP</name>
        <dbReference type="ChEBI" id="CHEBI:37565"/>
    </ligand>
</feature>
<feature type="binding site" evidence="1">
    <location>
        <begin position="330"/>
        <end position="332"/>
    </location>
    <ligand>
        <name>GTP</name>
        <dbReference type="ChEBI" id="CHEBI:37565"/>
    </ligand>
</feature>
<feature type="binding site" evidence="1">
    <location>
        <begin position="412"/>
        <end position="414"/>
    </location>
    <ligand>
        <name>GTP</name>
        <dbReference type="ChEBI" id="CHEBI:37565"/>
    </ligand>
</feature>
<accession>A4QHG2</accession>
<gene>
    <name evidence="1" type="primary">purA</name>
    <name type="ordered locus">cgR_2663</name>
</gene>
<sequence length="429" mass="46655">MAAIVIVGAQWGDEGKGKATDILGGLVDYVVKPNGGNNAGHTVVVGGEKYELKLLPAGVLSETATPILGNGVVINLEALFEEIDGLEARGADASRLRISANAHLVAPYHQVMDRVQERFLGKRAIGTTGRGIGPTYADKVSRVGIRVQDIFDESILRQKVESALDYKNQVLVKMYNRKAIVAEEIVQYFLSYADRLRPMVIDATLVLNEALDQGKHVLMEGGQATMLDVDHGTYPFVTSSNPTAGGASVGSGIGPTKITSSLGIIKAYTTRVGAGPFPTELFDKWGEYLQTVGGEVGVNTGRKRRCGWYDSVIARYASRVNGFTDYFLTKLDVLTGIGEIPICVAYDVDGVRHDEMPLTQSEFHHATPIFETMPAWDEDITDCKTFEDLPQKAQDYVRRLEELSGARFSYIGVGPGRDQTIVLHDVLEG</sequence>
<name>PURA_CORGB</name>
<protein>
    <recommendedName>
        <fullName evidence="1">Adenylosuccinate synthetase</fullName>
        <shortName evidence="1">AMPSase</shortName>
        <shortName evidence="1">AdSS</shortName>
        <ecNumber evidence="1">6.3.4.4</ecNumber>
    </recommendedName>
    <alternativeName>
        <fullName evidence="1">IMP--aspartate ligase</fullName>
    </alternativeName>
</protein>
<evidence type="ECO:0000255" key="1">
    <source>
        <dbReference type="HAMAP-Rule" id="MF_00011"/>
    </source>
</evidence>
<proteinExistence type="inferred from homology"/>
<dbReference type="EC" id="6.3.4.4" evidence="1"/>
<dbReference type="EMBL" id="AP009044">
    <property type="protein sequence ID" value="BAF55678.1"/>
    <property type="molecule type" value="Genomic_DNA"/>
</dbReference>
<dbReference type="RefSeq" id="WP_003853639.1">
    <property type="nucleotide sequence ID" value="NC_009342.1"/>
</dbReference>
<dbReference type="SMR" id="A4QHG2"/>
<dbReference type="KEGG" id="cgt:cgR_2663"/>
<dbReference type="HOGENOM" id="CLU_029848_0_0_11"/>
<dbReference type="PhylomeDB" id="A4QHG2"/>
<dbReference type="UniPathway" id="UPA00075">
    <property type="reaction ID" value="UER00335"/>
</dbReference>
<dbReference type="Proteomes" id="UP000006698">
    <property type="component" value="Chromosome"/>
</dbReference>
<dbReference type="GO" id="GO:0005737">
    <property type="term" value="C:cytoplasm"/>
    <property type="evidence" value="ECO:0007669"/>
    <property type="project" value="UniProtKB-SubCell"/>
</dbReference>
<dbReference type="GO" id="GO:0004019">
    <property type="term" value="F:adenylosuccinate synthase activity"/>
    <property type="evidence" value="ECO:0007669"/>
    <property type="project" value="UniProtKB-UniRule"/>
</dbReference>
<dbReference type="GO" id="GO:0005525">
    <property type="term" value="F:GTP binding"/>
    <property type="evidence" value="ECO:0007669"/>
    <property type="project" value="UniProtKB-UniRule"/>
</dbReference>
<dbReference type="GO" id="GO:0000287">
    <property type="term" value="F:magnesium ion binding"/>
    <property type="evidence" value="ECO:0007669"/>
    <property type="project" value="UniProtKB-UniRule"/>
</dbReference>
<dbReference type="GO" id="GO:0044208">
    <property type="term" value="P:'de novo' AMP biosynthetic process"/>
    <property type="evidence" value="ECO:0007669"/>
    <property type="project" value="UniProtKB-UniRule"/>
</dbReference>
<dbReference type="GO" id="GO:0046040">
    <property type="term" value="P:IMP metabolic process"/>
    <property type="evidence" value="ECO:0007669"/>
    <property type="project" value="TreeGrafter"/>
</dbReference>
<dbReference type="CDD" id="cd03108">
    <property type="entry name" value="AdSS"/>
    <property type="match status" value="1"/>
</dbReference>
<dbReference type="FunFam" id="1.10.300.10:FF:000001">
    <property type="entry name" value="Adenylosuccinate synthetase"/>
    <property type="match status" value="1"/>
</dbReference>
<dbReference type="FunFam" id="3.90.170.10:FF:000001">
    <property type="entry name" value="Adenylosuccinate synthetase"/>
    <property type="match status" value="1"/>
</dbReference>
<dbReference type="Gene3D" id="3.40.440.10">
    <property type="entry name" value="Adenylosuccinate Synthetase, subunit A, domain 1"/>
    <property type="match status" value="1"/>
</dbReference>
<dbReference type="Gene3D" id="1.10.300.10">
    <property type="entry name" value="Adenylosuccinate Synthetase, subunit A, domain 2"/>
    <property type="match status" value="1"/>
</dbReference>
<dbReference type="Gene3D" id="3.90.170.10">
    <property type="entry name" value="Adenylosuccinate Synthetase, subunit A, domain 3"/>
    <property type="match status" value="1"/>
</dbReference>
<dbReference type="HAMAP" id="MF_00011">
    <property type="entry name" value="Adenylosucc_synth"/>
    <property type="match status" value="1"/>
</dbReference>
<dbReference type="InterPro" id="IPR018220">
    <property type="entry name" value="Adenylosuccin_syn_GTP-bd"/>
</dbReference>
<dbReference type="InterPro" id="IPR033128">
    <property type="entry name" value="Adenylosuccin_syn_Lys_AS"/>
</dbReference>
<dbReference type="InterPro" id="IPR042109">
    <property type="entry name" value="Adenylosuccinate_synth_dom1"/>
</dbReference>
<dbReference type="InterPro" id="IPR042110">
    <property type="entry name" value="Adenylosuccinate_synth_dom2"/>
</dbReference>
<dbReference type="InterPro" id="IPR042111">
    <property type="entry name" value="Adenylosuccinate_synth_dom3"/>
</dbReference>
<dbReference type="InterPro" id="IPR001114">
    <property type="entry name" value="Adenylosuccinate_synthetase"/>
</dbReference>
<dbReference type="InterPro" id="IPR027417">
    <property type="entry name" value="P-loop_NTPase"/>
</dbReference>
<dbReference type="NCBIfam" id="NF002223">
    <property type="entry name" value="PRK01117.1"/>
    <property type="match status" value="1"/>
</dbReference>
<dbReference type="NCBIfam" id="TIGR00184">
    <property type="entry name" value="purA"/>
    <property type="match status" value="1"/>
</dbReference>
<dbReference type="PANTHER" id="PTHR11846">
    <property type="entry name" value="ADENYLOSUCCINATE SYNTHETASE"/>
    <property type="match status" value="1"/>
</dbReference>
<dbReference type="PANTHER" id="PTHR11846:SF0">
    <property type="entry name" value="ADENYLOSUCCINATE SYNTHETASE"/>
    <property type="match status" value="1"/>
</dbReference>
<dbReference type="Pfam" id="PF00709">
    <property type="entry name" value="Adenylsucc_synt"/>
    <property type="match status" value="1"/>
</dbReference>
<dbReference type="SMART" id="SM00788">
    <property type="entry name" value="Adenylsucc_synt"/>
    <property type="match status" value="1"/>
</dbReference>
<dbReference type="SUPFAM" id="SSF52540">
    <property type="entry name" value="P-loop containing nucleoside triphosphate hydrolases"/>
    <property type="match status" value="1"/>
</dbReference>
<dbReference type="PROSITE" id="PS01266">
    <property type="entry name" value="ADENYLOSUCCIN_SYN_1"/>
    <property type="match status" value="1"/>
</dbReference>
<dbReference type="PROSITE" id="PS00513">
    <property type="entry name" value="ADENYLOSUCCIN_SYN_2"/>
    <property type="match status" value="1"/>
</dbReference>
<reference key="1">
    <citation type="journal article" date="2007" name="Microbiology">
        <title>Comparative analysis of the Corynebacterium glutamicum group and complete genome sequence of strain R.</title>
        <authorList>
            <person name="Yukawa H."/>
            <person name="Omumasaba C.A."/>
            <person name="Nonaka H."/>
            <person name="Kos P."/>
            <person name="Okai N."/>
            <person name="Suzuki N."/>
            <person name="Suda M."/>
            <person name="Tsuge Y."/>
            <person name="Watanabe J."/>
            <person name="Ikeda Y."/>
            <person name="Vertes A.A."/>
            <person name="Inui M."/>
        </authorList>
    </citation>
    <scope>NUCLEOTIDE SEQUENCE [LARGE SCALE GENOMIC DNA]</scope>
    <source>
        <strain>R</strain>
    </source>
</reference>
<organism>
    <name type="scientific">Corynebacterium glutamicum (strain R)</name>
    <dbReference type="NCBI Taxonomy" id="340322"/>
    <lineage>
        <taxon>Bacteria</taxon>
        <taxon>Bacillati</taxon>
        <taxon>Actinomycetota</taxon>
        <taxon>Actinomycetes</taxon>
        <taxon>Mycobacteriales</taxon>
        <taxon>Corynebacteriaceae</taxon>
        <taxon>Corynebacterium</taxon>
    </lineage>
</organism>